<name>ARGB_ECO5E</name>
<dbReference type="EC" id="2.7.2.8" evidence="1"/>
<dbReference type="EMBL" id="CP001164">
    <property type="protein sequence ID" value="ACI37785.1"/>
    <property type="molecule type" value="Genomic_DNA"/>
</dbReference>
<dbReference type="SMR" id="B5Z061"/>
<dbReference type="KEGG" id="ecf:ECH74115_5419"/>
<dbReference type="HOGENOM" id="CLU_053680_1_1_6"/>
<dbReference type="UniPathway" id="UPA00068">
    <property type="reaction ID" value="UER00107"/>
</dbReference>
<dbReference type="GO" id="GO:0005737">
    <property type="term" value="C:cytoplasm"/>
    <property type="evidence" value="ECO:0007669"/>
    <property type="project" value="UniProtKB-SubCell"/>
</dbReference>
<dbReference type="GO" id="GO:0003991">
    <property type="term" value="F:acetylglutamate kinase activity"/>
    <property type="evidence" value="ECO:0007669"/>
    <property type="project" value="UniProtKB-UniRule"/>
</dbReference>
<dbReference type="GO" id="GO:0005524">
    <property type="term" value="F:ATP binding"/>
    <property type="evidence" value="ECO:0007669"/>
    <property type="project" value="UniProtKB-UniRule"/>
</dbReference>
<dbReference type="GO" id="GO:0042450">
    <property type="term" value="P:arginine biosynthetic process via ornithine"/>
    <property type="evidence" value="ECO:0007669"/>
    <property type="project" value="UniProtKB-UniRule"/>
</dbReference>
<dbReference type="GO" id="GO:0006526">
    <property type="term" value="P:L-arginine biosynthetic process"/>
    <property type="evidence" value="ECO:0007669"/>
    <property type="project" value="UniProtKB-UniPathway"/>
</dbReference>
<dbReference type="CDD" id="cd04249">
    <property type="entry name" value="AAK_NAGK-NC"/>
    <property type="match status" value="1"/>
</dbReference>
<dbReference type="FunFam" id="3.40.1160.10:FF:000008">
    <property type="entry name" value="Acetylglutamate kinase"/>
    <property type="match status" value="1"/>
</dbReference>
<dbReference type="Gene3D" id="3.40.1160.10">
    <property type="entry name" value="Acetylglutamate kinase-like"/>
    <property type="match status" value="1"/>
</dbReference>
<dbReference type="HAMAP" id="MF_00082">
    <property type="entry name" value="ArgB"/>
    <property type="match status" value="1"/>
</dbReference>
<dbReference type="InterPro" id="IPR036393">
    <property type="entry name" value="AceGlu_kinase-like_sf"/>
</dbReference>
<dbReference type="InterPro" id="IPR004662">
    <property type="entry name" value="AcgluKinase_fam"/>
</dbReference>
<dbReference type="InterPro" id="IPR037528">
    <property type="entry name" value="ArgB"/>
</dbReference>
<dbReference type="InterPro" id="IPR001048">
    <property type="entry name" value="Asp/Glu/Uridylate_kinase"/>
</dbReference>
<dbReference type="InterPro" id="IPR041731">
    <property type="entry name" value="NAGK-NC"/>
</dbReference>
<dbReference type="NCBIfam" id="TIGR00761">
    <property type="entry name" value="argB"/>
    <property type="match status" value="1"/>
</dbReference>
<dbReference type="PANTHER" id="PTHR23342">
    <property type="entry name" value="N-ACETYLGLUTAMATE SYNTHASE"/>
    <property type="match status" value="1"/>
</dbReference>
<dbReference type="PANTHER" id="PTHR23342:SF0">
    <property type="entry name" value="N-ACETYLGLUTAMATE SYNTHASE, MITOCHONDRIAL"/>
    <property type="match status" value="1"/>
</dbReference>
<dbReference type="Pfam" id="PF00696">
    <property type="entry name" value="AA_kinase"/>
    <property type="match status" value="1"/>
</dbReference>
<dbReference type="PIRSF" id="PIRSF000728">
    <property type="entry name" value="NAGK"/>
    <property type="match status" value="1"/>
</dbReference>
<dbReference type="SUPFAM" id="SSF53633">
    <property type="entry name" value="Carbamate kinase-like"/>
    <property type="match status" value="1"/>
</dbReference>
<protein>
    <recommendedName>
        <fullName evidence="1">Acetylglutamate kinase</fullName>
        <ecNumber evidence="1">2.7.2.8</ecNumber>
    </recommendedName>
    <alternativeName>
        <fullName evidence="1">N-acetyl-L-glutamate 5-phosphotransferase</fullName>
    </alternativeName>
    <alternativeName>
        <fullName evidence="1">NAG kinase</fullName>
        <shortName evidence="1">NAGK</shortName>
    </alternativeName>
</protein>
<organism>
    <name type="scientific">Escherichia coli O157:H7 (strain EC4115 / EHEC)</name>
    <dbReference type="NCBI Taxonomy" id="444450"/>
    <lineage>
        <taxon>Bacteria</taxon>
        <taxon>Pseudomonadati</taxon>
        <taxon>Pseudomonadota</taxon>
        <taxon>Gammaproteobacteria</taxon>
        <taxon>Enterobacterales</taxon>
        <taxon>Enterobacteriaceae</taxon>
        <taxon>Escherichia</taxon>
    </lineage>
</organism>
<feature type="chain" id="PRO_1000092856" description="Acetylglutamate kinase">
    <location>
        <begin position="1"/>
        <end position="257"/>
    </location>
</feature>
<feature type="binding site" evidence="1">
    <location>
        <begin position="43"/>
        <end position="44"/>
    </location>
    <ligand>
        <name>substrate</name>
    </ligand>
</feature>
<feature type="binding site" evidence="1">
    <location>
        <position position="65"/>
    </location>
    <ligand>
        <name>substrate</name>
    </ligand>
</feature>
<feature type="binding site" evidence="1">
    <location>
        <position position="157"/>
    </location>
    <ligand>
        <name>substrate</name>
    </ligand>
</feature>
<feature type="binding site" evidence="1">
    <location>
        <begin position="180"/>
        <end position="185"/>
    </location>
    <ligand>
        <name>ATP</name>
        <dbReference type="ChEBI" id="CHEBI:30616"/>
    </ligand>
</feature>
<feature type="binding site" evidence="1">
    <location>
        <begin position="208"/>
        <end position="210"/>
    </location>
    <ligand>
        <name>ATP</name>
        <dbReference type="ChEBI" id="CHEBI:30616"/>
    </ligand>
</feature>
<feature type="site" description="Transition state stabilizer" evidence="1">
    <location>
        <position position="7"/>
    </location>
</feature>
<feature type="site" description="Transition state stabilizer" evidence="1">
    <location>
        <position position="216"/>
    </location>
</feature>
<gene>
    <name evidence="1" type="primary">argB</name>
    <name type="ordered locus">ECH74115_5419</name>
</gene>
<evidence type="ECO:0000255" key="1">
    <source>
        <dbReference type="HAMAP-Rule" id="MF_00082"/>
    </source>
</evidence>
<proteinExistence type="inferred from homology"/>
<reference key="1">
    <citation type="journal article" date="2011" name="Proc. Natl. Acad. Sci. U.S.A.">
        <title>Genomic anatomy of Escherichia coli O157:H7 outbreaks.</title>
        <authorList>
            <person name="Eppinger M."/>
            <person name="Mammel M.K."/>
            <person name="Leclerc J.E."/>
            <person name="Ravel J."/>
            <person name="Cebula T.A."/>
        </authorList>
    </citation>
    <scope>NUCLEOTIDE SEQUENCE [LARGE SCALE GENOMIC DNA]</scope>
    <source>
        <strain>EC4115 / EHEC</strain>
    </source>
</reference>
<keyword id="KW-0028">Amino-acid biosynthesis</keyword>
<keyword id="KW-0055">Arginine biosynthesis</keyword>
<keyword id="KW-0067">ATP-binding</keyword>
<keyword id="KW-0963">Cytoplasm</keyword>
<keyword id="KW-0418">Kinase</keyword>
<keyword id="KW-0547">Nucleotide-binding</keyword>
<keyword id="KW-0808">Transferase</keyword>
<accession>B5Z061</accession>
<comment type="function">
    <text evidence="1">Catalyzes the ATP-dependent phosphorylation of N-acetyl-L-glutamate.</text>
</comment>
<comment type="catalytic activity">
    <reaction evidence="1">
        <text>N-acetyl-L-glutamate + ATP = N-acetyl-L-glutamyl 5-phosphate + ADP</text>
        <dbReference type="Rhea" id="RHEA:14629"/>
        <dbReference type="ChEBI" id="CHEBI:30616"/>
        <dbReference type="ChEBI" id="CHEBI:44337"/>
        <dbReference type="ChEBI" id="CHEBI:57936"/>
        <dbReference type="ChEBI" id="CHEBI:456216"/>
        <dbReference type="EC" id="2.7.2.8"/>
    </reaction>
</comment>
<comment type="pathway">
    <text evidence="1">Amino-acid biosynthesis; L-arginine biosynthesis; N(2)-acetyl-L-ornithine from L-glutamate: step 2/4.</text>
</comment>
<comment type="subunit">
    <text evidence="1">Homodimer.</text>
</comment>
<comment type="subcellular location">
    <subcellularLocation>
        <location evidence="1">Cytoplasm</location>
    </subcellularLocation>
</comment>
<comment type="similarity">
    <text evidence="1">Belongs to the acetylglutamate kinase family. ArgB subfamily.</text>
</comment>
<sequence length="257" mass="27028">MNPLIIKLGGVLLDSEEALERLFSALVNYRESHQRPLVIVHGGGCVVDELMKGLNLPVKKKNGLRVTPADQIDIITGALAGTANKTLLAWAKKHQIAAVGLFLGDGDSVKVTQLDEELGHVGLAQPGSPKLINSLLENGYLPVVSSIGVTDEGQLMNVNADQAATALAATLGADLILLSDVSGILDGKGQRIAEMTAAKAEQLIEQGIITDGMIVKVNAALDAARTLGRPVDIASWRHAEQLPALFNGMPMGTRILA</sequence>